<dbReference type="EMBL" id="EF489041">
    <property type="protein sequence ID" value="ABO36724.1"/>
    <property type="molecule type" value="Genomic_DNA"/>
</dbReference>
<dbReference type="RefSeq" id="YP_001109521.1">
    <property type="nucleotide sequence ID" value="NC_009143.1"/>
</dbReference>
<dbReference type="SMR" id="A4GYT0"/>
<dbReference type="FunCoup" id="A4GYT0">
    <property type="interactions" value="39"/>
</dbReference>
<dbReference type="STRING" id="3694.A4GYT0"/>
<dbReference type="GeneID" id="4929689"/>
<dbReference type="KEGG" id="pop:4929689"/>
<dbReference type="InParanoid" id="A4GYT0"/>
<dbReference type="OrthoDB" id="35473at2759"/>
<dbReference type="Proteomes" id="UP000006729">
    <property type="component" value="Chloroplast"/>
</dbReference>
<dbReference type="GO" id="GO:0009535">
    <property type="term" value="C:chloroplast thylakoid membrane"/>
    <property type="evidence" value="ECO:0007669"/>
    <property type="project" value="UniProtKB-SubCell"/>
</dbReference>
<dbReference type="GO" id="GO:0009512">
    <property type="term" value="C:cytochrome b6f complex"/>
    <property type="evidence" value="ECO:0007669"/>
    <property type="project" value="InterPro"/>
</dbReference>
<dbReference type="GO" id="GO:0045158">
    <property type="term" value="F:electron transporter, transferring electrons within cytochrome b6/f complex of photosystem II activity"/>
    <property type="evidence" value="ECO:0007669"/>
    <property type="project" value="UniProtKB-UniRule"/>
</dbReference>
<dbReference type="GO" id="GO:0017004">
    <property type="term" value="P:cytochrome complex assembly"/>
    <property type="evidence" value="ECO:0007669"/>
    <property type="project" value="UniProtKB-UniRule"/>
</dbReference>
<dbReference type="GO" id="GO:0015979">
    <property type="term" value="P:photosynthesis"/>
    <property type="evidence" value="ECO:0007669"/>
    <property type="project" value="UniProtKB-KW"/>
</dbReference>
<dbReference type="HAMAP" id="MF_00432">
    <property type="entry name" value="Cytb6_f_PetG"/>
    <property type="match status" value="1"/>
</dbReference>
<dbReference type="InterPro" id="IPR003683">
    <property type="entry name" value="Cyt_6/f_cplx_su5"/>
</dbReference>
<dbReference type="InterPro" id="IPR036099">
    <property type="entry name" value="Cyt_6/f_cplx_su5_sf"/>
</dbReference>
<dbReference type="NCBIfam" id="NF001907">
    <property type="entry name" value="PRK00665.1"/>
    <property type="match status" value="1"/>
</dbReference>
<dbReference type="Pfam" id="PF02529">
    <property type="entry name" value="PetG"/>
    <property type="match status" value="1"/>
</dbReference>
<dbReference type="PIRSF" id="PIRSF000034">
    <property type="entry name" value="Cyt_b6-f_V"/>
    <property type="match status" value="1"/>
</dbReference>
<dbReference type="SUPFAM" id="SSF103446">
    <property type="entry name" value="PetG subunit of the cytochrome b6f complex"/>
    <property type="match status" value="1"/>
</dbReference>
<evidence type="ECO:0000255" key="1">
    <source>
        <dbReference type="HAMAP-Rule" id="MF_00432"/>
    </source>
</evidence>
<accession>A4GYT0</accession>
<sequence>MIEVFLFGIVLGLIPITLAGLFVTAYLQYRRGDQLDL</sequence>
<reference key="1">
    <citation type="journal article" date="2006" name="Science">
        <title>The genome of black cottonwood, Populus trichocarpa (Torr. &amp; Gray).</title>
        <authorList>
            <person name="Tuskan G.A."/>
            <person name="Difazio S."/>
            <person name="Jansson S."/>
            <person name="Bohlmann J."/>
            <person name="Grigoriev I."/>
            <person name="Hellsten U."/>
            <person name="Putnam N."/>
            <person name="Ralph S."/>
            <person name="Rombauts S."/>
            <person name="Salamov A."/>
            <person name="Schein J."/>
            <person name="Sterck L."/>
            <person name="Aerts A."/>
            <person name="Bhalerao R.R."/>
            <person name="Bhalerao R.P."/>
            <person name="Blaudez D."/>
            <person name="Boerjan W."/>
            <person name="Brun A."/>
            <person name="Brunner A."/>
            <person name="Busov V."/>
            <person name="Campbell M."/>
            <person name="Carlson J."/>
            <person name="Chalot M."/>
            <person name="Chapman J."/>
            <person name="Chen G.-L."/>
            <person name="Cooper D."/>
            <person name="Coutinho P.M."/>
            <person name="Couturier J."/>
            <person name="Covert S."/>
            <person name="Cronk Q."/>
            <person name="Cunningham R."/>
            <person name="Davis J."/>
            <person name="Degroeve S."/>
            <person name="Dejardin A."/>
            <person name="dePamphilis C.W."/>
            <person name="Detter J."/>
            <person name="Dirks B."/>
            <person name="Dubchak I."/>
            <person name="Duplessis S."/>
            <person name="Ehlting J."/>
            <person name="Ellis B."/>
            <person name="Gendler K."/>
            <person name="Goodstein D."/>
            <person name="Gribskov M."/>
            <person name="Grimwood J."/>
            <person name="Groover A."/>
            <person name="Gunter L."/>
            <person name="Hamberger B."/>
            <person name="Heinze B."/>
            <person name="Helariutta Y."/>
            <person name="Henrissat B."/>
            <person name="Holligan D."/>
            <person name="Holt R."/>
            <person name="Huang W."/>
            <person name="Islam-Faridi N."/>
            <person name="Jones S."/>
            <person name="Jones-Rhoades M."/>
            <person name="Jorgensen R."/>
            <person name="Joshi C."/>
            <person name="Kangasjaervi J."/>
            <person name="Karlsson J."/>
            <person name="Kelleher C."/>
            <person name="Kirkpatrick R."/>
            <person name="Kirst M."/>
            <person name="Kohler A."/>
            <person name="Kalluri U."/>
            <person name="Larimer F."/>
            <person name="Leebens-Mack J."/>
            <person name="Leple J.-C."/>
            <person name="Locascio P."/>
            <person name="Lou Y."/>
            <person name="Lucas S."/>
            <person name="Martin F."/>
            <person name="Montanini B."/>
            <person name="Napoli C."/>
            <person name="Nelson D.R."/>
            <person name="Nelson C."/>
            <person name="Nieminen K."/>
            <person name="Nilsson O."/>
            <person name="Pereda V."/>
            <person name="Peter G."/>
            <person name="Philippe R."/>
            <person name="Pilate G."/>
            <person name="Poliakov A."/>
            <person name="Razumovskaya J."/>
            <person name="Richardson P."/>
            <person name="Rinaldi C."/>
            <person name="Ritland K."/>
            <person name="Rouze P."/>
            <person name="Ryaboy D."/>
            <person name="Schmutz J."/>
            <person name="Schrader J."/>
            <person name="Segerman B."/>
            <person name="Shin H."/>
            <person name="Siddiqui A."/>
            <person name="Sterky F."/>
            <person name="Terry A."/>
            <person name="Tsai C.-J."/>
            <person name="Uberbacher E."/>
            <person name="Unneberg P."/>
            <person name="Vahala J."/>
            <person name="Wall K."/>
            <person name="Wessler S."/>
            <person name="Yang G."/>
            <person name="Yin T."/>
            <person name="Douglas C."/>
            <person name="Marra M."/>
            <person name="Sandberg G."/>
            <person name="Van de Peer Y."/>
            <person name="Rokhsar D.S."/>
        </authorList>
    </citation>
    <scope>NUCLEOTIDE SEQUENCE [LARGE SCALE GENOMIC DNA]</scope>
    <source>
        <strain>cv. Nisqually</strain>
    </source>
</reference>
<comment type="function">
    <text evidence="1">Component of the cytochrome b6-f complex, which mediates electron transfer between photosystem II (PSII) and photosystem I (PSI), cyclic electron flow around PSI, and state transitions. PetG is required for either the stability or assembly of the cytochrome b6-f complex.</text>
</comment>
<comment type="subunit">
    <text evidence="1">The 4 large subunits of the cytochrome b6-f complex are cytochrome b6, subunit IV (17 kDa polypeptide, PetD), cytochrome f and the Rieske protein, while the 4 small subunits are PetG, PetL, PetM and PetN. The complex functions as a dimer.</text>
</comment>
<comment type="subcellular location">
    <subcellularLocation>
        <location evidence="1">Plastid</location>
        <location evidence="1">Chloroplast thylakoid membrane</location>
        <topology evidence="1">Single-pass membrane protein</topology>
    </subcellularLocation>
</comment>
<comment type="similarity">
    <text evidence="1">Belongs to the PetG family.</text>
</comment>
<name>PETG_POPTR</name>
<gene>
    <name evidence="1" type="primary">petG</name>
    <name type="ordered locus">Poptr_cp042</name>
</gene>
<geneLocation type="chloroplast"/>
<feature type="chain" id="PRO_0000355410" description="Cytochrome b6-f complex subunit 5">
    <location>
        <begin position="1"/>
        <end position="37"/>
    </location>
</feature>
<feature type="transmembrane region" description="Helical" evidence="1">
    <location>
        <begin position="5"/>
        <end position="25"/>
    </location>
</feature>
<protein>
    <recommendedName>
        <fullName evidence="1">Cytochrome b6-f complex subunit 5</fullName>
    </recommendedName>
    <alternativeName>
        <fullName evidence="1">Cytochrome b6-f complex subunit PetG</fullName>
    </alternativeName>
    <alternativeName>
        <fullName evidence="1">Cytochrome b6-f complex subunit V</fullName>
    </alternativeName>
</protein>
<proteinExistence type="inferred from homology"/>
<organism>
    <name type="scientific">Populus trichocarpa</name>
    <name type="common">Western balsam poplar</name>
    <name type="synonym">Populus balsamifera subsp. trichocarpa</name>
    <dbReference type="NCBI Taxonomy" id="3694"/>
    <lineage>
        <taxon>Eukaryota</taxon>
        <taxon>Viridiplantae</taxon>
        <taxon>Streptophyta</taxon>
        <taxon>Embryophyta</taxon>
        <taxon>Tracheophyta</taxon>
        <taxon>Spermatophyta</taxon>
        <taxon>Magnoliopsida</taxon>
        <taxon>eudicotyledons</taxon>
        <taxon>Gunneridae</taxon>
        <taxon>Pentapetalae</taxon>
        <taxon>rosids</taxon>
        <taxon>fabids</taxon>
        <taxon>Malpighiales</taxon>
        <taxon>Salicaceae</taxon>
        <taxon>Saliceae</taxon>
        <taxon>Populus</taxon>
    </lineage>
</organism>
<keyword id="KW-0150">Chloroplast</keyword>
<keyword id="KW-0249">Electron transport</keyword>
<keyword id="KW-0472">Membrane</keyword>
<keyword id="KW-0602">Photosynthesis</keyword>
<keyword id="KW-0934">Plastid</keyword>
<keyword id="KW-1185">Reference proteome</keyword>
<keyword id="KW-0793">Thylakoid</keyword>
<keyword id="KW-0812">Transmembrane</keyword>
<keyword id="KW-1133">Transmembrane helix</keyword>
<keyword id="KW-0813">Transport</keyword>